<organism>
    <name type="scientific">Mamestra brassicae</name>
    <name type="common">Cabbage moth</name>
    <dbReference type="NCBI Taxonomy" id="55057"/>
    <lineage>
        <taxon>Eukaryota</taxon>
        <taxon>Metazoa</taxon>
        <taxon>Ecdysozoa</taxon>
        <taxon>Arthropoda</taxon>
        <taxon>Hexapoda</taxon>
        <taxon>Insecta</taxon>
        <taxon>Pterygota</taxon>
        <taxon>Neoptera</taxon>
        <taxon>Endopterygota</taxon>
        <taxon>Lepidoptera</taxon>
        <taxon>Glossata</taxon>
        <taxon>Ditrysia</taxon>
        <taxon>Noctuoidea</taxon>
        <taxon>Noctuidae</taxon>
        <taxon>Hadeninae</taxon>
        <taxon>Mamestra</taxon>
    </lineage>
</organism>
<feature type="chain" id="PRO_0000408251" description="Sensory neuron membrane protein 1">
    <location>
        <begin position="1"/>
        <end position="525"/>
    </location>
</feature>
<feature type="topological domain" description="Cytoplasmic" evidence="3">
    <location>
        <begin position="1"/>
        <end position="11"/>
    </location>
</feature>
<feature type="transmembrane region" description="Helical" evidence="3">
    <location>
        <begin position="12"/>
        <end position="32"/>
    </location>
</feature>
<feature type="topological domain" description="Extracellular" evidence="3">
    <location>
        <begin position="33"/>
        <end position="456"/>
    </location>
</feature>
<feature type="transmembrane region" description="Helical" evidence="3">
    <location>
        <begin position="457"/>
        <end position="477"/>
    </location>
</feature>
<feature type="topological domain" description="Cytoplasmic" evidence="3">
    <location>
        <begin position="478"/>
        <end position="525"/>
    </location>
</feature>
<feature type="region of interest" description="Disordered" evidence="4">
    <location>
        <begin position="497"/>
        <end position="525"/>
    </location>
</feature>
<feature type="glycosylation site" description="N-linked (GlcNAc...) asparagine" evidence="3">
    <location>
        <position position="67"/>
    </location>
</feature>
<feature type="glycosylation site" description="N-linked (GlcNAc...) asparagine" evidence="3">
    <location>
        <position position="229"/>
    </location>
</feature>
<feature type="glycosylation site" description="N-linked (GlcNAc...) asparagine" evidence="3">
    <location>
        <position position="324"/>
    </location>
</feature>
<feature type="glycosylation site" description="N-linked (GlcNAc...) asparagine" evidence="3">
    <location>
        <position position="440"/>
    </location>
</feature>
<feature type="disulfide bond" evidence="2">
    <location>
        <begin position="268"/>
        <end position="333"/>
    </location>
</feature>
<feature type="disulfide bond" evidence="2">
    <location>
        <begin position="297"/>
        <end position="352"/>
    </location>
</feature>
<feature type="disulfide bond" evidence="2">
    <location>
        <begin position="335"/>
        <end position="341"/>
    </location>
</feature>
<keyword id="KW-1003">Cell membrane</keyword>
<keyword id="KW-1015">Disulfide bond</keyword>
<keyword id="KW-0325">Glycoprotein</keyword>
<keyword id="KW-0472">Membrane</keyword>
<keyword id="KW-0552">Olfaction</keyword>
<keyword id="KW-0675">Receptor</keyword>
<keyword id="KW-0716">Sensory transduction</keyword>
<keyword id="KW-0812">Transmembrane</keyword>
<keyword id="KW-1133">Transmembrane helix</keyword>
<name>SNMP1_MAMBR</name>
<evidence type="ECO:0000250" key="1">
    <source>
        <dbReference type="UniProtKB" id="O02351"/>
    </source>
</evidence>
<evidence type="ECO:0000250" key="2">
    <source>
        <dbReference type="UniProtKB" id="P26201"/>
    </source>
</evidence>
<evidence type="ECO:0000255" key="3"/>
<evidence type="ECO:0000256" key="4">
    <source>
        <dbReference type="SAM" id="MobiDB-lite"/>
    </source>
</evidence>
<evidence type="ECO:0000305" key="5"/>
<evidence type="ECO:0000312" key="6">
    <source>
        <dbReference type="EMBL" id="AAO15603.1"/>
    </source>
</evidence>
<gene>
    <name evidence="6" type="primary">SNMP-1</name>
</gene>
<protein>
    <recommendedName>
        <fullName>Sensory neuron membrane protein 1</fullName>
    </recommendedName>
</protein>
<proteinExistence type="evidence at transcript level"/>
<accession>Q8I9S2</accession>
<comment type="function">
    <text evidence="1">Plays an olfactory role that is not restricted to pheromone sensitivity.</text>
</comment>
<comment type="subcellular location">
    <subcellularLocation>
        <location evidence="1">Cell membrane</location>
        <topology evidence="1">Multi-pass membrane protein</topology>
    </subcellularLocation>
</comment>
<comment type="similarity">
    <text evidence="5">Belongs to the CD36 family.</text>
</comment>
<reference evidence="6" key="1">
    <citation type="submission" date="2001-12" db="EMBL/GenBank/DDBJ databases">
        <title>Molecular cloning of Mamestra brassicae sensory neuron membrane protein-1 (SNMP-1) homolog.</title>
        <authorList>
            <person name="Jacquin-Joly E."/>
            <person name="Francois M.-C."/>
        </authorList>
    </citation>
    <scope>NUCLEOTIDE SEQUENCE [MRNA]</scope>
</reference>
<sequence length="525" mass="59391">MLLPKELKYAAIAGGVAVFGLIFGWVLFPVILKGQLKKEMALSKKTDVRKMWEQIPFALEFKVYLFNYTNAEEVQKGAKPILKEIGPYHFDEWKEKVEIEDHEEDDTITYKRRDAFYFNPEMSAPGLTGEEIVVIPHIFMLGMALTVHRDKPAMLNMVGKAMNGIFDSPPDIFMRVKALDILFRGIIINCARTEFAPKATCTALKKEGVSGLVLEPNNQFRFSVFGTRNNTIDPHVITVKRGIKNVMDVGQVVAVDGKTEQTIWRDACNEYQGTDGTVFPPFLTENDRIQSFSTDLCRSFKPWYQKKTSYRGIKTNRYIANIGNFSEDPELHCFCPDPDKCPPKGLMDLAPCIKAPMYASMPHFLDSDPALLNNVKGLNPDINQHGIEIDFEPISGTPMVAKQRIQFNLQLLKTEKIDLFKDLSGDIVPLFWIDEGLALNKTFVNMLKHQLFIPKRVVGVLRWWMVSFGSLGADIGIVYHFRDHIMRLAVSGDTKVSKVTPEEDPEQKDISVIGPPAQEPAKINI</sequence>
<dbReference type="EMBL" id="AF462066">
    <property type="protein sequence ID" value="AAO15603.1"/>
    <property type="molecule type" value="mRNA"/>
</dbReference>
<dbReference type="SMR" id="Q8I9S2"/>
<dbReference type="GlyCosmos" id="Q8I9S2">
    <property type="glycosylation" value="4 sites, No reported glycans"/>
</dbReference>
<dbReference type="GO" id="GO:0005737">
    <property type="term" value="C:cytoplasm"/>
    <property type="evidence" value="ECO:0007669"/>
    <property type="project" value="TreeGrafter"/>
</dbReference>
<dbReference type="GO" id="GO:0005886">
    <property type="term" value="C:plasma membrane"/>
    <property type="evidence" value="ECO:0007669"/>
    <property type="project" value="UniProtKB-SubCell"/>
</dbReference>
<dbReference type="GO" id="GO:0005044">
    <property type="term" value="F:scavenger receptor activity"/>
    <property type="evidence" value="ECO:0007669"/>
    <property type="project" value="TreeGrafter"/>
</dbReference>
<dbReference type="GO" id="GO:0007608">
    <property type="term" value="P:sensory perception of smell"/>
    <property type="evidence" value="ECO:0007669"/>
    <property type="project" value="UniProtKB-KW"/>
</dbReference>
<dbReference type="InterPro" id="IPR002159">
    <property type="entry name" value="CD36_fam"/>
</dbReference>
<dbReference type="PANTHER" id="PTHR11923">
    <property type="entry name" value="SCAVENGER RECEPTOR CLASS B TYPE-1 SR-B1"/>
    <property type="match status" value="1"/>
</dbReference>
<dbReference type="PANTHER" id="PTHR11923:SF69">
    <property type="entry name" value="SENSORY NEURON MEMBRANE PROTEIN 1"/>
    <property type="match status" value="1"/>
</dbReference>
<dbReference type="Pfam" id="PF01130">
    <property type="entry name" value="CD36"/>
    <property type="match status" value="1"/>
</dbReference>
<dbReference type="PRINTS" id="PR01609">
    <property type="entry name" value="CD36FAMILY"/>
</dbReference>